<accession>Q9A9X1</accession>
<dbReference type="EC" id="2.1.1.222" evidence="1"/>
<dbReference type="EC" id="2.1.1.64" evidence="1"/>
<dbReference type="EMBL" id="AE005673">
    <property type="protein sequence ID" value="AAK22825.1"/>
    <property type="molecule type" value="Genomic_DNA"/>
</dbReference>
<dbReference type="PIR" id="E87353">
    <property type="entry name" value="E87353"/>
</dbReference>
<dbReference type="RefSeq" id="NP_419657.1">
    <property type="nucleotide sequence ID" value="NC_002696.2"/>
</dbReference>
<dbReference type="RefSeq" id="WP_010918725.1">
    <property type="nucleotide sequence ID" value="NC_002696.2"/>
</dbReference>
<dbReference type="SMR" id="Q9A9X1"/>
<dbReference type="STRING" id="190650.CC_0840"/>
<dbReference type="EnsemblBacteria" id="AAK22825">
    <property type="protein sequence ID" value="AAK22825"/>
    <property type="gene ID" value="CC_0840"/>
</dbReference>
<dbReference type="KEGG" id="ccr:CC_0840"/>
<dbReference type="PATRIC" id="fig|190650.5.peg.854"/>
<dbReference type="eggNOG" id="COG2227">
    <property type="taxonomic scope" value="Bacteria"/>
</dbReference>
<dbReference type="HOGENOM" id="CLU_042432_0_0_5"/>
<dbReference type="BioCyc" id="CAULO:CC0840-MONOMER"/>
<dbReference type="UniPathway" id="UPA00232"/>
<dbReference type="Proteomes" id="UP000001816">
    <property type="component" value="Chromosome"/>
</dbReference>
<dbReference type="GO" id="GO:0102208">
    <property type="term" value="F:2-polyprenyl-6-hydroxyphenol methylase activity"/>
    <property type="evidence" value="ECO:0007669"/>
    <property type="project" value="UniProtKB-EC"/>
</dbReference>
<dbReference type="GO" id="GO:0061542">
    <property type="term" value="F:3-demethylubiquinol 3-O-methyltransferase activity"/>
    <property type="evidence" value="ECO:0007669"/>
    <property type="project" value="UniProtKB-UniRule"/>
</dbReference>
<dbReference type="GO" id="GO:0010420">
    <property type="term" value="F:polyprenyldihydroxybenzoate methyltransferase activity"/>
    <property type="evidence" value="ECO:0007669"/>
    <property type="project" value="InterPro"/>
</dbReference>
<dbReference type="GO" id="GO:0032259">
    <property type="term" value="P:methylation"/>
    <property type="evidence" value="ECO:0007669"/>
    <property type="project" value="UniProtKB-KW"/>
</dbReference>
<dbReference type="CDD" id="cd02440">
    <property type="entry name" value="AdoMet_MTases"/>
    <property type="match status" value="1"/>
</dbReference>
<dbReference type="Gene3D" id="3.40.50.150">
    <property type="entry name" value="Vaccinia Virus protein VP39"/>
    <property type="match status" value="1"/>
</dbReference>
<dbReference type="HAMAP" id="MF_00472">
    <property type="entry name" value="UbiG"/>
    <property type="match status" value="1"/>
</dbReference>
<dbReference type="InterPro" id="IPR029063">
    <property type="entry name" value="SAM-dependent_MTases_sf"/>
</dbReference>
<dbReference type="InterPro" id="IPR010233">
    <property type="entry name" value="UbiG_MeTrfase"/>
</dbReference>
<dbReference type="NCBIfam" id="TIGR01983">
    <property type="entry name" value="UbiG"/>
    <property type="match status" value="1"/>
</dbReference>
<dbReference type="PANTHER" id="PTHR43464">
    <property type="entry name" value="METHYLTRANSFERASE"/>
    <property type="match status" value="1"/>
</dbReference>
<dbReference type="PANTHER" id="PTHR43464:SF19">
    <property type="entry name" value="UBIQUINONE BIOSYNTHESIS O-METHYLTRANSFERASE, MITOCHONDRIAL"/>
    <property type="match status" value="1"/>
</dbReference>
<dbReference type="Pfam" id="PF13489">
    <property type="entry name" value="Methyltransf_23"/>
    <property type="match status" value="1"/>
</dbReference>
<dbReference type="SUPFAM" id="SSF53335">
    <property type="entry name" value="S-adenosyl-L-methionine-dependent methyltransferases"/>
    <property type="match status" value="1"/>
</dbReference>
<reference key="1">
    <citation type="journal article" date="2001" name="Proc. Natl. Acad. Sci. U.S.A.">
        <title>Complete genome sequence of Caulobacter crescentus.</title>
        <authorList>
            <person name="Nierman W.C."/>
            <person name="Feldblyum T.V."/>
            <person name="Laub M.T."/>
            <person name="Paulsen I.T."/>
            <person name="Nelson K.E."/>
            <person name="Eisen J.A."/>
            <person name="Heidelberg J.F."/>
            <person name="Alley M.R.K."/>
            <person name="Ohta N."/>
            <person name="Maddock J.R."/>
            <person name="Potocka I."/>
            <person name="Nelson W.C."/>
            <person name="Newton A."/>
            <person name="Stephens C."/>
            <person name="Phadke N.D."/>
            <person name="Ely B."/>
            <person name="DeBoy R.T."/>
            <person name="Dodson R.J."/>
            <person name="Durkin A.S."/>
            <person name="Gwinn M.L."/>
            <person name="Haft D.H."/>
            <person name="Kolonay J.F."/>
            <person name="Smit J."/>
            <person name="Craven M.B."/>
            <person name="Khouri H.M."/>
            <person name="Shetty J."/>
            <person name="Berry K.J."/>
            <person name="Utterback T.R."/>
            <person name="Tran K."/>
            <person name="Wolf A.M."/>
            <person name="Vamathevan J.J."/>
            <person name="Ermolaeva M.D."/>
            <person name="White O."/>
            <person name="Salzberg S.L."/>
            <person name="Venter J.C."/>
            <person name="Shapiro L."/>
            <person name="Fraser C.M."/>
        </authorList>
    </citation>
    <scope>NUCLEOTIDE SEQUENCE [LARGE SCALE GENOMIC DNA]</scope>
    <source>
        <strain>ATCC 19089 / CIP 103742 / CB 15</strain>
    </source>
</reference>
<organism>
    <name type="scientific">Caulobacter vibrioides (strain ATCC 19089 / CIP 103742 / CB 15)</name>
    <name type="common">Caulobacter crescentus</name>
    <dbReference type="NCBI Taxonomy" id="190650"/>
    <lineage>
        <taxon>Bacteria</taxon>
        <taxon>Pseudomonadati</taxon>
        <taxon>Pseudomonadota</taxon>
        <taxon>Alphaproteobacteria</taxon>
        <taxon>Caulobacterales</taxon>
        <taxon>Caulobacteraceae</taxon>
        <taxon>Caulobacter</taxon>
    </lineage>
</organism>
<proteinExistence type="inferred from homology"/>
<comment type="function">
    <text evidence="1">O-methyltransferase that catalyzes the 2 O-methylation steps in the ubiquinone biosynthetic pathway.</text>
</comment>
<comment type="catalytic activity">
    <reaction evidence="1">
        <text>a 3-demethylubiquinol + S-adenosyl-L-methionine = a ubiquinol + S-adenosyl-L-homocysteine + H(+)</text>
        <dbReference type="Rhea" id="RHEA:44380"/>
        <dbReference type="Rhea" id="RHEA-COMP:9566"/>
        <dbReference type="Rhea" id="RHEA-COMP:10914"/>
        <dbReference type="ChEBI" id="CHEBI:15378"/>
        <dbReference type="ChEBI" id="CHEBI:17976"/>
        <dbReference type="ChEBI" id="CHEBI:57856"/>
        <dbReference type="ChEBI" id="CHEBI:59789"/>
        <dbReference type="ChEBI" id="CHEBI:84422"/>
        <dbReference type="EC" id="2.1.1.64"/>
    </reaction>
</comment>
<comment type="catalytic activity">
    <reaction evidence="1">
        <text>a 3-(all-trans-polyprenyl)benzene-1,2-diol + S-adenosyl-L-methionine = a 2-methoxy-6-(all-trans-polyprenyl)phenol + S-adenosyl-L-homocysteine + H(+)</text>
        <dbReference type="Rhea" id="RHEA:31411"/>
        <dbReference type="Rhea" id="RHEA-COMP:9550"/>
        <dbReference type="Rhea" id="RHEA-COMP:9551"/>
        <dbReference type="ChEBI" id="CHEBI:15378"/>
        <dbReference type="ChEBI" id="CHEBI:57856"/>
        <dbReference type="ChEBI" id="CHEBI:59789"/>
        <dbReference type="ChEBI" id="CHEBI:62729"/>
        <dbReference type="ChEBI" id="CHEBI:62731"/>
        <dbReference type="EC" id="2.1.1.222"/>
    </reaction>
</comment>
<comment type="pathway">
    <text evidence="1">Cofactor biosynthesis; ubiquinone biosynthesis.</text>
</comment>
<comment type="similarity">
    <text evidence="1">Belongs to the methyltransferase superfamily. UbiG/COQ3 family.</text>
</comment>
<gene>
    <name evidence="1" type="primary">ubiG</name>
    <name type="ordered locus">CC_0840</name>
</gene>
<keyword id="KW-0489">Methyltransferase</keyword>
<keyword id="KW-1185">Reference proteome</keyword>
<keyword id="KW-0949">S-adenosyl-L-methionine</keyword>
<keyword id="KW-0808">Transferase</keyword>
<keyword id="KW-0831">Ubiquinone biosynthesis</keyword>
<sequence length="252" mass="27245">MTQAASAAPSWSIDPADVARFSAIAAEWWDPKGKFAPLHVFNPCRLAFIREQALARFDRDGAARAPFEGLTLLDIGCGGGLLSEPMARLGFAVTAIDASEKNIKTAATHAAEQGLDIGYRPATAEQLLAEGAGPFDVVLTMEVIEHVADPGEFLRTCAKLLKPGGIMFVATLNRTLKALALAKIGAEYVLRWVPPGTHDWKQFLKPEELRAFLAGEPVAMQGPFGVAYNPLTGRWSRSSDTDINYMMTVTKD</sequence>
<feature type="chain" id="PRO_0000193376" description="Ubiquinone biosynthesis O-methyltransferase">
    <location>
        <begin position="1"/>
        <end position="252"/>
    </location>
</feature>
<feature type="binding site" evidence="1">
    <location>
        <position position="45"/>
    </location>
    <ligand>
        <name>S-adenosyl-L-methionine</name>
        <dbReference type="ChEBI" id="CHEBI:59789"/>
    </ligand>
</feature>
<feature type="binding site" evidence="1">
    <location>
        <position position="76"/>
    </location>
    <ligand>
        <name>S-adenosyl-L-methionine</name>
        <dbReference type="ChEBI" id="CHEBI:59789"/>
    </ligand>
</feature>
<feature type="binding site" evidence="1">
    <location>
        <position position="97"/>
    </location>
    <ligand>
        <name>S-adenosyl-L-methionine</name>
        <dbReference type="ChEBI" id="CHEBI:59789"/>
    </ligand>
</feature>
<feature type="binding site" evidence="1">
    <location>
        <position position="141"/>
    </location>
    <ligand>
        <name>S-adenosyl-L-methionine</name>
        <dbReference type="ChEBI" id="CHEBI:59789"/>
    </ligand>
</feature>
<name>UBIG_CAUVC</name>
<protein>
    <recommendedName>
        <fullName evidence="1">Ubiquinone biosynthesis O-methyltransferase</fullName>
    </recommendedName>
    <alternativeName>
        <fullName evidence="1">2-polyprenyl-6-hydroxyphenol methylase</fullName>
        <ecNumber evidence="1">2.1.1.222</ecNumber>
    </alternativeName>
    <alternativeName>
        <fullName evidence="1">3-demethylubiquinone 3-O-methyltransferase</fullName>
        <ecNumber evidence="1">2.1.1.64</ecNumber>
    </alternativeName>
</protein>
<evidence type="ECO:0000255" key="1">
    <source>
        <dbReference type="HAMAP-Rule" id="MF_00472"/>
    </source>
</evidence>